<dbReference type="EMBL" id="AE016826">
    <property type="protein sequence ID" value="AAO27031.1"/>
    <property type="molecule type" value="Genomic_DNA"/>
</dbReference>
<dbReference type="RefSeq" id="WP_011091432.1">
    <property type="nucleotide sequence ID" value="NC_004545.1"/>
</dbReference>
<dbReference type="SMR" id="Q89AI1"/>
<dbReference type="STRING" id="224915.bbp_309"/>
<dbReference type="KEGG" id="bab:bbp_309"/>
<dbReference type="eggNOG" id="COG0728">
    <property type="taxonomic scope" value="Bacteria"/>
</dbReference>
<dbReference type="HOGENOM" id="CLU_006797_5_3_6"/>
<dbReference type="OrthoDB" id="9816572at2"/>
<dbReference type="UniPathway" id="UPA00219"/>
<dbReference type="Proteomes" id="UP000000601">
    <property type="component" value="Chromosome"/>
</dbReference>
<dbReference type="GO" id="GO:0005886">
    <property type="term" value="C:plasma membrane"/>
    <property type="evidence" value="ECO:0007669"/>
    <property type="project" value="UniProtKB-SubCell"/>
</dbReference>
<dbReference type="GO" id="GO:0015648">
    <property type="term" value="F:lipid-linked peptidoglycan transporter activity"/>
    <property type="evidence" value="ECO:0007669"/>
    <property type="project" value="UniProtKB-UniRule"/>
</dbReference>
<dbReference type="GO" id="GO:0071555">
    <property type="term" value="P:cell wall organization"/>
    <property type="evidence" value="ECO:0007669"/>
    <property type="project" value="UniProtKB-KW"/>
</dbReference>
<dbReference type="GO" id="GO:0034204">
    <property type="term" value="P:lipid translocation"/>
    <property type="evidence" value="ECO:0007669"/>
    <property type="project" value="TreeGrafter"/>
</dbReference>
<dbReference type="GO" id="GO:0009252">
    <property type="term" value="P:peptidoglycan biosynthetic process"/>
    <property type="evidence" value="ECO:0007669"/>
    <property type="project" value="UniProtKB-UniRule"/>
</dbReference>
<dbReference type="GO" id="GO:0008360">
    <property type="term" value="P:regulation of cell shape"/>
    <property type="evidence" value="ECO:0007669"/>
    <property type="project" value="UniProtKB-KW"/>
</dbReference>
<dbReference type="CDD" id="cd13123">
    <property type="entry name" value="MATE_MurJ_like"/>
    <property type="match status" value="1"/>
</dbReference>
<dbReference type="HAMAP" id="MF_02078">
    <property type="entry name" value="MurJ_MviN"/>
    <property type="match status" value="1"/>
</dbReference>
<dbReference type="InterPro" id="IPR051050">
    <property type="entry name" value="Lipid_II_flippase_MurJ/MviN"/>
</dbReference>
<dbReference type="InterPro" id="IPR004268">
    <property type="entry name" value="MurJ"/>
</dbReference>
<dbReference type="NCBIfam" id="TIGR01695">
    <property type="entry name" value="murJ_mviN"/>
    <property type="match status" value="1"/>
</dbReference>
<dbReference type="PANTHER" id="PTHR47019">
    <property type="entry name" value="LIPID II FLIPPASE MURJ"/>
    <property type="match status" value="1"/>
</dbReference>
<dbReference type="PANTHER" id="PTHR47019:SF1">
    <property type="entry name" value="LIPID II FLIPPASE MURJ"/>
    <property type="match status" value="1"/>
</dbReference>
<dbReference type="Pfam" id="PF03023">
    <property type="entry name" value="MurJ"/>
    <property type="match status" value="1"/>
</dbReference>
<dbReference type="PIRSF" id="PIRSF002869">
    <property type="entry name" value="MviN"/>
    <property type="match status" value="1"/>
</dbReference>
<dbReference type="PRINTS" id="PR01806">
    <property type="entry name" value="VIRFACTRMVIN"/>
</dbReference>
<evidence type="ECO:0000255" key="1">
    <source>
        <dbReference type="HAMAP-Rule" id="MF_02078"/>
    </source>
</evidence>
<protein>
    <recommendedName>
        <fullName evidence="1">Probable lipid II flippase MurJ</fullName>
    </recommendedName>
</protein>
<organism>
    <name type="scientific">Buchnera aphidicola subsp. Baizongia pistaciae (strain Bp)</name>
    <dbReference type="NCBI Taxonomy" id="224915"/>
    <lineage>
        <taxon>Bacteria</taxon>
        <taxon>Pseudomonadati</taxon>
        <taxon>Pseudomonadota</taxon>
        <taxon>Gammaproteobacteria</taxon>
        <taxon>Enterobacterales</taxon>
        <taxon>Erwiniaceae</taxon>
        <taxon>Buchnera</taxon>
    </lineage>
</organism>
<proteinExistence type="inferred from homology"/>
<accession>Q89AI1</accession>
<reference key="1">
    <citation type="journal article" date="2003" name="Proc. Natl. Acad. Sci. U.S.A.">
        <title>Reductive genome evolution in Buchnera aphidicola.</title>
        <authorList>
            <person name="van Ham R.C.H.J."/>
            <person name="Kamerbeek J."/>
            <person name="Palacios C."/>
            <person name="Rausell C."/>
            <person name="Abascal F."/>
            <person name="Bastolla U."/>
            <person name="Fernandez J.M."/>
            <person name="Jimenez L."/>
            <person name="Postigo M."/>
            <person name="Silva F.J."/>
            <person name="Tamames J."/>
            <person name="Viguera E."/>
            <person name="Latorre A."/>
            <person name="Valencia A."/>
            <person name="Moran F."/>
            <person name="Moya A."/>
        </authorList>
    </citation>
    <scope>NUCLEOTIDE SEQUENCE [LARGE SCALE GENOMIC DNA]</scope>
    <source>
        <strain>Bp</strain>
    </source>
</reference>
<sequence length="513" mass="58590">MNILKSLISLSLITFISRILGFMRDLLIAYSFGASGITDAFFLAFKIPNLFRRIFAEGAFSQVFIPILSEYKNNKNIELTRNFISNILGLMIIILSLFTAFGIYFANDIVKICAPGFINSHEKLYLATKMLKIMFPYIFFVSLGSLTGSILNAWNYFSVPAYSSIFLNLSMIMFISFVTAYFNPKILSLAWAVIVGGVFQILYQFPYLKNINMLIFPKFNILNLGVLKFLKQIGIVALGMSVNQVSIIIATISSSFLISGSISWIYYSDRLVEFISGIFGVSLSTILLPLLSKSVNNINIKEYSRLLNWALRLVCILVIPSIIILFTLSESLITLLFKYGAFTYNDVIMTKNVIEFYSIGLLPFVLIKILLAGFYSIRNVKTPMKISIFILVLTQLMNIFFIKYFQYTSFALAISLASWINFFLLYRKLCQSEFFIPSTNWLRFLLKIFAAAMVMLILLFINKNLILSANTHSIFFKILRLFYICASSGGGYLFTLFCLGLRFNHFYLKSYKY</sequence>
<keyword id="KW-0997">Cell inner membrane</keyword>
<keyword id="KW-1003">Cell membrane</keyword>
<keyword id="KW-0133">Cell shape</keyword>
<keyword id="KW-0961">Cell wall biogenesis/degradation</keyword>
<keyword id="KW-0472">Membrane</keyword>
<keyword id="KW-0573">Peptidoglycan synthesis</keyword>
<keyword id="KW-1185">Reference proteome</keyword>
<keyword id="KW-0812">Transmembrane</keyword>
<keyword id="KW-1133">Transmembrane helix</keyword>
<keyword id="KW-0813">Transport</keyword>
<name>MURJ_BUCBP</name>
<comment type="function">
    <text evidence="1">Involved in peptidoglycan biosynthesis. Transports lipid-linked peptidoglycan precursors from the inner to the outer leaflet of the cytoplasmic membrane.</text>
</comment>
<comment type="pathway">
    <text evidence="1">Cell wall biogenesis; peptidoglycan biosynthesis.</text>
</comment>
<comment type="subcellular location">
    <subcellularLocation>
        <location evidence="1">Cell inner membrane</location>
        <topology evidence="1">Multi-pass membrane protein</topology>
    </subcellularLocation>
</comment>
<comment type="similarity">
    <text evidence="1">Belongs to the MurJ/MviN family.</text>
</comment>
<feature type="chain" id="PRO_0000182002" description="Probable lipid II flippase MurJ">
    <location>
        <begin position="1"/>
        <end position="513"/>
    </location>
</feature>
<feature type="transmembrane region" description="Helical" evidence="1">
    <location>
        <begin position="3"/>
        <end position="23"/>
    </location>
</feature>
<feature type="transmembrane region" description="Helical" evidence="1">
    <location>
        <begin position="25"/>
        <end position="45"/>
    </location>
</feature>
<feature type="transmembrane region" description="Helical" evidence="1">
    <location>
        <begin position="83"/>
        <end position="103"/>
    </location>
</feature>
<feature type="transmembrane region" description="Helical" evidence="1">
    <location>
        <begin position="133"/>
        <end position="153"/>
    </location>
</feature>
<feature type="transmembrane region" description="Helical" evidence="1">
    <location>
        <begin position="162"/>
        <end position="182"/>
    </location>
</feature>
<feature type="transmembrane region" description="Helical" evidence="1">
    <location>
        <begin position="186"/>
        <end position="206"/>
    </location>
</feature>
<feature type="transmembrane region" description="Helical" evidence="1">
    <location>
        <begin position="221"/>
        <end position="241"/>
    </location>
</feature>
<feature type="transmembrane region" description="Helical" evidence="1">
    <location>
        <begin position="245"/>
        <end position="265"/>
    </location>
</feature>
<feature type="transmembrane region" description="Helical" evidence="1">
    <location>
        <begin position="271"/>
        <end position="291"/>
    </location>
</feature>
<feature type="transmembrane region" description="Helical" evidence="1">
    <location>
        <begin position="313"/>
        <end position="333"/>
    </location>
</feature>
<feature type="transmembrane region" description="Helical" evidence="1">
    <location>
        <begin position="354"/>
        <end position="374"/>
    </location>
</feature>
<feature type="transmembrane region" description="Helical" evidence="1">
    <location>
        <begin position="382"/>
        <end position="402"/>
    </location>
</feature>
<feature type="transmembrane region" description="Helical" evidence="1">
    <location>
        <begin position="405"/>
        <end position="425"/>
    </location>
</feature>
<feature type="transmembrane region" description="Helical" evidence="1">
    <location>
        <begin position="441"/>
        <end position="461"/>
    </location>
</feature>
<feature type="transmembrane region" description="Helical" evidence="1">
    <location>
        <begin position="481"/>
        <end position="501"/>
    </location>
</feature>
<gene>
    <name evidence="1" type="primary">murJ</name>
    <name type="synonym">mviN</name>
    <name type="ordered locus">bbp_309</name>
</gene>